<keyword id="KW-0210">Decarboxylase</keyword>
<keyword id="KW-0456">Lyase</keyword>
<keyword id="KW-0665">Pyrimidine biosynthesis</keyword>
<comment type="function">
    <text evidence="1">Catalyzes the decarboxylation of orotidine 5'-monophosphate (OMP) to uridine 5'-monophosphate (UMP).</text>
</comment>
<comment type="catalytic activity">
    <reaction evidence="1">
        <text>orotidine 5'-phosphate + H(+) = UMP + CO2</text>
        <dbReference type="Rhea" id="RHEA:11596"/>
        <dbReference type="ChEBI" id="CHEBI:15378"/>
        <dbReference type="ChEBI" id="CHEBI:16526"/>
        <dbReference type="ChEBI" id="CHEBI:57538"/>
        <dbReference type="ChEBI" id="CHEBI:57865"/>
        <dbReference type="EC" id="4.1.1.23"/>
    </reaction>
</comment>
<comment type="pathway">
    <text evidence="1">Pyrimidine metabolism; UMP biosynthesis via de novo pathway; UMP from orotate: step 2/2.</text>
</comment>
<comment type="subunit">
    <text evidence="1">Homodimer.</text>
</comment>
<comment type="similarity">
    <text evidence="1">Belongs to the OMP decarboxylase family. Type 1 subfamily.</text>
</comment>
<reference key="1">
    <citation type="journal article" date="1998" name="Microbiology">
        <title>Unconventional organization of the division and cell wall gene cluster of Streptococcus pneumoniae.</title>
        <authorList>
            <person name="Massidda O."/>
            <person name="Anderluzzi D."/>
            <person name="Friedli L."/>
            <person name="Feger G."/>
        </authorList>
    </citation>
    <scope>NUCLEOTIDE SEQUENCE [GENOMIC DNA]</scope>
</reference>
<reference key="2">
    <citation type="journal article" date="2001" name="Microb. Drug Resist.">
        <title>Annotated draft genomic sequence from a Streptococcus pneumoniae type 19F clinical isolate.</title>
        <authorList>
            <person name="Dopazo J."/>
            <person name="Mendoza A."/>
            <person name="Herrero J."/>
            <person name="Caldara F."/>
            <person name="Humbert Y."/>
            <person name="Friedli L."/>
            <person name="Guerrier M."/>
            <person name="Grand-Schenk E."/>
            <person name="Gandin C."/>
            <person name="de Francesco M."/>
            <person name="Polissi A."/>
            <person name="Buell G."/>
            <person name="Feger G."/>
            <person name="Garcia E."/>
            <person name="Peitsch M."/>
            <person name="Garcia-Bustos J.F."/>
        </authorList>
    </citation>
    <scope>NUCLEOTIDE SEQUENCE [LARGE SCALE GENOMIC DNA]</scope>
    <source>
        <strain>G54</strain>
    </source>
</reference>
<reference key="3">
    <citation type="submission" date="2008-03" db="EMBL/GenBank/DDBJ databases">
        <title>Pneumococcal beta glucoside metabolism investigated by whole genome comparison.</title>
        <authorList>
            <person name="Mulas L."/>
            <person name="Trappetti C."/>
            <person name="Hakenbeck R."/>
            <person name="Iannelli F."/>
            <person name="Pozzi G."/>
            <person name="Davidsen T.M."/>
            <person name="Tettelin H."/>
            <person name="Oggioni M."/>
        </authorList>
    </citation>
    <scope>NUCLEOTIDE SEQUENCE [LARGE SCALE GENOMIC DNA]</scope>
    <source>
        <strain>G54</strain>
    </source>
</reference>
<evidence type="ECO:0000255" key="1">
    <source>
        <dbReference type="HAMAP-Rule" id="MF_01200"/>
    </source>
</evidence>
<sequence>MREHRPIIALDFPSFEAVKEFLALFPAEESLYLKVGMELYYAAGPEIVSYLKGLGHSVFLDLKLHDIPNTVKSAMKVLSQLGVDMTNVHAAGGVEMMKAAREGLGSQAKLIAVTQLTSTSEAQMQEFQNIQTSLQESVIHYAKKTAEAGLDGVVCSAQEVQVIKQATNPDFICLTPGIRPAGVAVGDQKRVMTPADAYQIGSDYIVVGRPITQAEDPVAAYHAIKDEWTQDWN</sequence>
<accession>B5E301</accession>
<accession>Q9ZHA7</accession>
<name>PYRF_STRP4</name>
<dbReference type="EC" id="4.1.1.23" evidence="1"/>
<dbReference type="EMBL" id="AF068902">
    <property type="protein sequence ID" value="AAC95452.1"/>
    <property type="molecule type" value="Genomic_DNA"/>
</dbReference>
<dbReference type="EMBL" id="CP001015">
    <property type="protein sequence ID" value="ACF56433.1"/>
    <property type="molecule type" value="Genomic_DNA"/>
</dbReference>
<dbReference type="SMR" id="B5E301"/>
<dbReference type="KEGG" id="spx:SPG_0631"/>
<dbReference type="HOGENOM" id="CLU_067069_1_1_9"/>
<dbReference type="UniPathway" id="UPA00070">
    <property type="reaction ID" value="UER00120"/>
</dbReference>
<dbReference type="GO" id="GO:0005829">
    <property type="term" value="C:cytosol"/>
    <property type="evidence" value="ECO:0007669"/>
    <property type="project" value="TreeGrafter"/>
</dbReference>
<dbReference type="GO" id="GO:0004590">
    <property type="term" value="F:orotidine-5'-phosphate decarboxylase activity"/>
    <property type="evidence" value="ECO:0007669"/>
    <property type="project" value="UniProtKB-UniRule"/>
</dbReference>
<dbReference type="GO" id="GO:0006207">
    <property type="term" value="P:'de novo' pyrimidine nucleobase biosynthetic process"/>
    <property type="evidence" value="ECO:0007669"/>
    <property type="project" value="InterPro"/>
</dbReference>
<dbReference type="GO" id="GO:0044205">
    <property type="term" value="P:'de novo' UMP biosynthetic process"/>
    <property type="evidence" value="ECO:0007669"/>
    <property type="project" value="UniProtKB-UniRule"/>
</dbReference>
<dbReference type="CDD" id="cd04725">
    <property type="entry name" value="OMP_decarboxylase_like"/>
    <property type="match status" value="1"/>
</dbReference>
<dbReference type="FunFam" id="3.20.20.70:FF:000015">
    <property type="entry name" value="Orotidine 5'-phosphate decarboxylase"/>
    <property type="match status" value="1"/>
</dbReference>
<dbReference type="Gene3D" id="3.20.20.70">
    <property type="entry name" value="Aldolase class I"/>
    <property type="match status" value="1"/>
</dbReference>
<dbReference type="HAMAP" id="MF_01200_B">
    <property type="entry name" value="OMPdecase_type1_B"/>
    <property type="match status" value="1"/>
</dbReference>
<dbReference type="InterPro" id="IPR013785">
    <property type="entry name" value="Aldolase_TIM"/>
</dbReference>
<dbReference type="InterPro" id="IPR014732">
    <property type="entry name" value="OMPdecase"/>
</dbReference>
<dbReference type="InterPro" id="IPR018089">
    <property type="entry name" value="OMPdecase_AS"/>
</dbReference>
<dbReference type="InterPro" id="IPR047596">
    <property type="entry name" value="OMPdecase_bac"/>
</dbReference>
<dbReference type="InterPro" id="IPR001754">
    <property type="entry name" value="OMPdeCOase_dom"/>
</dbReference>
<dbReference type="InterPro" id="IPR011060">
    <property type="entry name" value="RibuloseP-bd_barrel"/>
</dbReference>
<dbReference type="NCBIfam" id="NF001273">
    <property type="entry name" value="PRK00230.1"/>
    <property type="match status" value="1"/>
</dbReference>
<dbReference type="NCBIfam" id="TIGR01740">
    <property type="entry name" value="pyrF"/>
    <property type="match status" value="1"/>
</dbReference>
<dbReference type="PANTHER" id="PTHR32119">
    <property type="entry name" value="OROTIDINE 5'-PHOSPHATE DECARBOXYLASE"/>
    <property type="match status" value="1"/>
</dbReference>
<dbReference type="PANTHER" id="PTHR32119:SF2">
    <property type="entry name" value="OROTIDINE 5'-PHOSPHATE DECARBOXYLASE"/>
    <property type="match status" value="1"/>
</dbReference>
<dbReference type="Pfam" id="PF00215">
    <property type="entry name" value="OMPdecase"/>
    <property type="match status" value="1"/>
</dbReference>
<dbReference type="SMART" id="SM00934">
    <property type="entry name" value="OMPdecase"/>
    <property type="match status" value="1"/>
</dbReference>
<dbReference type="SUPFAM" id="SSF51366">
    <property type="entry name" value="Ribulose-phoshate binding barrel"/>
    <property type="match status" value="1"/>
</dbReference>
<dbReference type="PROSITE" id="PS00156">
    <property type="entry name" value="OMPDECASE"/>
    <property type="match status" value="1"/>
</dbReference>
<feature type="chain" id="PRO_1000138562" description="Orotidine 5'-phosphate decarboxylase">
    <location>
        <begin position="1"/>
        <end position="233"/>
    </location>
</feature>
<feature type="active site" description="Proton donor" evidence="1">
    <location>
        <position position="63"/>
    </location>
</feature>
<feature type="binding site" evidence="1">
    <location>
        <position position="11"/>
    </location>
    <ligand>
        <name>substrate</name>
    </ligand>
</feature>
<feature type="binding site" evidence="1">
    <location>
        <position position="34"/>
    </location>
    <ligand>
        <name>substrate</name>
    </ligand>
</feature>
<feature type="binding site" evidence="1">
    <location>
        <begin position="61"/>
        <end position="70"/>
    </location>
    <ligand>
        <name>substrate</name>
    </ligand>
</feature>
<feature type="binding site" evidence="1">
    <location>
        <position position="117"/>
    </location>
    <ligand>
        <name>substrate</name>
    </ligand>
</feature>
<feature type="binding site" evidence="1">
    <location>
        <position position="179"/>
    </location>
    <ligand>
        <name>substrate</name>
    </ligand>
</feature>
<feature type="binding site" evidence="1">
    <location>
        <position position="188"/>
    </location>
    <ligand>
        <name>substrate</name>
    </ligand>
</feature>
<feature type="binding site" evidence="1">
    <location>
        <position position="208"/>
    </location>
    <ligand>
        <name>substrate</name>
    </ligand>
</feature>
<feature type="binding site" evidence="1">
    <location>
        <position position="209"/>
    </location>
    <ligand>
        <name>substrate</name>
    </ligand>
</feature>
<protein>
    <recommendedName>
        <fullName evidence="1">Orotidine 5'-phosphate decarboxylase</fullName>
        <ecNumber evidence="1">4.1.1.23</ecNumber>
    </recommendedName>
    <alternativeName>
        <fullName evidence="1">OMP decarboxylase</fullName>
        <shortName evidence="1">OMPDCase</shortName>
        <shortName evidence="1">OMPdecase</shortName>
    </alternativeName>
</protein>
<organism>
    <name type="scientific">Streptococcus pneumoniae serotype 19F (strain G54)</name>
    <dbReference type="NCBI Taxonomy" id="512566"/>
    <lineage>
        <taxon>Bacteria</taxon>
        <taxon>Bacillati</taxon>
        <taxon>Bacillota</taxon>
        <taxon>Bacilli</taxon>
        <taxon>Lactobacillales</taxon>
        <taxon>Streptococcaceae</taxon>
        <taxon>Streptococcus</taxon>
    </lineage>
</organism>
<gene>
    <name evidence="1" type="primary">pyrF</name>
    <name type="ordered locus">SPG_0631</name>
</gene>
<proteinExistence type="inferred from homology"/>